<name>SAP1_ORYSI</name>
<accession>A2Z2J6</accession>
<accession>Q0J0R7</accession>
<accession>Q9LLX1</accession>
<keyword id="KW-0479">Metal-binding</keyword>
<keyword id="KW-1185">Reference proteome</keyword>
<keyword id="KW-0346">Stress response</keyword>
<keyword id="KW-0862">Zinc</keyword>
<keyword id="KW-0863">Zinc-finger</keyword>
<reference key="1">
    <citation type="journal article" date="2004" name="Proc. Natl. Acad. Sci. U.S.A.">
        <title>Overexpression of a zinc-finger protein gene from rice confers tolerance to cold, dehydration, and salt stress in transgenic tobacco.</title>
        <authorList>
            <person name="Mukhopadhyay A."/>
            <person name="Vij S."/>
            <person name="Tyagi A.K."/>
        </authorList>
    </citation>
    <scope>NUCLEOTIDE SEQUENCE [GENOMIC DNA / MRNA]</scope>
    <scope>INDUCTION</scope>
    <scope>TISSUE SPECIFICITY</scope>
    <source>
        <strain>cv. Pusa Basmati</strain>
    </source>
</reference>
<reference key="2">
    <citation type="journal article" date="2005" name="PLoS Biol.">
        <title>The genomes of Oryza sativa: a history of duplications.</title>
        <authorList>
            <person name="Yu J."/>
            <person name="Wang J."/>
            <person name="Lin W."/>
            <person name="Li S."/>
            <person name="Li H."/>
            <person name="Zhou J."/>
            <person name="Ni P."/>
            <person name="Dong W."/>
            <person name="Hu S."/>
            <person name="Zeng C."/>
            <person name="Zhang J."/>
            <person name="Zhang Y."/>
            <person name="Li R."/>
            <person name="Xu Z."/>
            <person name="Li S."/>
            <person name="Li X."/>
            <person name="Zheng H."/>
            <person name="Cong L."/>
            <person name="Lin L."/>
            <person name="Yin J."/>
            <person name="Geng J."/>
            <person name="Li G."/>
            <person name="Shi J."/>
            <person name="Liu J."/>
            <person name="Lv H."/>
            <person name="Li J."/>
            <person name="Wang J."/>
            <person name="Deng Y."/>
            <person name="Ran L."/>
            <person name="Shi X."/>
            <person name="Wang X."/>
            <person name="Wu Q."/>
            <person name="Li C."/>
            <person name="Ren X."/>
            <person name="Wang J."/>
            <person name="Wang X."/>
            <person name="Li D."/>
            <person name="Liu D."/>
            <person name="Zhang X."/>
            <person name="Ji Z."/>
            <person name="Zhao W."/>
            <person name="Sun Y."/>
            <person name="Zhang Z."/>
            <person name="Bao J."/>
            <person name="Han Y."/>
            <person name="Dong L."/>
            <person name="Ji J."/>
            <person name="Chen P."/>
            <person name="Wu S."/>
            <person name="Liu J."/>
            <person name="Xiao Y."/>
            <person name="Bu D."/>
            <person name="Tan J."/>
            <person name="Yang L."/>
            <person name="Ye C."/>
            <person name="Zhang J."/>
            <person name="Xu J."/>
            <person name="Zhou Y."/>
            <person name="Yu Y."/>
            <person name="Zhang B."/>
            <person name="Zhuang S."/>
            <person name="Wei H."/>
            <person name="Liu B."/>
            <person name="Lei M."/>
            <person name="Yu H."/>
            <person name="Li Y."/>
            <person name="Xu H."/>
            <person name="Wei S."/>
            <person name="He X."/>
            <person name="Fang L."/>
            <person name="Zhang Z."/>
            <person name="Zhang Y."/>
            <person name="Huang X."/>
            <person name="Su Z."/>
            <person name="Tong W."/>
            <person name="Li J."/>
            <person name="Tong Z."/>
            <person name="Li S."/>
            <person name="Ye J."/>
            <person name="Wang L."/>
            <person name="Fang L."/>
            <person name="Lei T."/>
            <person name="Chen C.-S."/>
            <person name="Chen H.-C."/>
            <person name="Xu Z."/>
            <person name="Li H."/>
            <person name="Huang H."/>
            <person name="Zhang F."/>
            <person name="Xu H."/>
            <person name="Li N."/>
            <person name="Zhao C."/>
            <person name="Li S."/>
            <person name="Dong L."/>
            <person name="Huang Y."/>
            <person name="Li L."/>
            <person name="Xi Y."/>
            <person name="Qi Q."/>
            <person name="Li W."/>
            <person name="Zhang B."/>
            <person name="Hu W."/>
            <person name="Zhang Y."/>
            <person name="Tian X."/>
            <person name="Jiao Y."/>
            <person name="Liang X."/>
            <person name="Jin J."/>
            <person name="Gao L."/>
            <person name="Zheng W."/>
            <person name="Hao B."/>
            <person name="Liu S.-M."/>
            <person name="Wang W."/>
            <person name="Yuan L."/>
            <person name="Cao M."/>
            <person name="McDermott J."/>
            <person name="Samudrala R."/>
            <person name="Wang J."/>
            <person name="Wong G.K.-S."/>
            <person name="Yang H."/>
        </authorList>
    </citation>
    <scope>NUCLEOTIDE SEQUENCE [LARGE SCALE GENOMIC DNA]</scope>
    <source>
        <strain>cv. 93-11</strain>
    </source>
</reference>
<reference key="3">
    <citation type="submission" date="2007-04" db="EMBL/GenBank/DDBJ databases">
        <title>A comparative transcriptome map of early and late salinity stress responses in contrasting genotypes of Oryza sativa L.</title>
        <authorList>
            <person name="Kumari S."/>
            <person name="Panjabi V."/>
            <person name="Singla-Pareek S.L."/>
            <person name="Sopory S.K."/>
            <person name="Pareek A."/>
        </authorList>
    </citation>
    <scope>NUCLEOTIDE SEQUENCE [LARGE SCALE MRNA]</scope>
    <source>
        <tissue>Shoot</tissue>
    </source>
</reference>
<reference key="4">
    <citation type="journal article" date="2006" name="Mol. Genet. Genomics">
        <title>Genome-wide analysis of the stress associated protein (SAP) gene family containing A20/AN1 zinc-finger(s) in rice and their phylogenetic relationship with Arabidopsis.</title>
        <authorList>
            <person name="Vij S."/>
            <person name="Tyagi A.K."/>
        </authorList>
    </citation>
    <scope>GENE FAMILY</scope>
    <scope>INDUCTION</scope>
</reference>
<feature type="chain" id="PRO_0000303673" description="Zinc finger A20 and AN1 domain-containing stress-associated protein 1">
    <location>
        <begin position="1"/>
        <end position="164"/>
    </location>
</feature>
<feature type="zinc finger region" description="A20-type" evidence="2">
    <location>
        <begin position="16"/>
        <end position="50"/>
    </location>
</feature>
<feature type="zinc finger region" description="AN1-type" evidence="1">
    <location>
        <begin position="99"/>
        <end position="145"/>
    </location>
</feature>
<feature type="region of interest" description="Disordered" evidence="3">
    <location>
        <begin position="48"/>
        <end position="81"/>
    </location>
</feature>
<feature type="compositionally biased region" description="Low complexity" evidence="3">
    <location>
        <begin position="48"/>
        <end position="58"/>
    </location>
</feature>
<feature type="binding site" evidence="2">
    <location>
        <position position="22"/>
    </location>
    <ligand>
        <name>Zn(2+)</name>
        <dbReference type="ChEBI" id="CHEBI:29105"/>
        <label>1</label>
    </ligand>
</feature>
<feature type="binding site" evidence="2">
    <location>
        <position position="26"/>
    </location>
    <ligand>
        <name>Zn(2+)</name>
        <dbReference type="ChEBI" id="CHEBI:29105"/>
        <label>1</label>
    </ligand>
</feature>
<feature type="binding site" evidence="2">
    <location>
        <position position="38"/>
    </location>
    <ligand>
        <name>Zn(2+)</name>
        <dbReference type="ChEBI" id="CHEBI:29105"/>
        <label>1</label>
    </ligand>
</feature>
<feature type="binding site" evidence="2">
    <location>
        <position position="41"/>
    </location>
    <ligand>
        <name>Zn(2+)</name>
        <dbReference type="ChEBI" id="CHEBI:29105"/>
        <label>1</label>
    </ligand>
</feature>
<feature type="binding site" evidence="1">
    <location>
        <position position="105"/>
    </location>
    <ligand>
        <name>Zn(2+)</name>
        <dbReference type="ChEBI" id="CHEBI:29105"/>
        <label>2</label>
    </ligand>
</feature>
<feature type="binding site" evidence="1">
    <location>
        <position position="108"/>
    </location>
    <ligand>
        <name>Zn(2+)</name>
        <dbReference type="ChEBI" id="CHEBI:29105"/>
        <label>2</label>
    </ligand>
</feature>
<feature type="binding site" evidence="1">
    <location>
        <position position="119"/>
    </location>
    <ligand>
        <name>Zn(2+)</name>
        <dbReference type="ChEBI" id="CHEBI:29105"/>
        <label>3</label>
    </ligand>
</feature>
<feature type="binding site" evidence="1">
    <location>
        <position position="121"/>
    </location>
    <ligand>
        <name>Zn(2+)</name>
        <dbReference type="ChEBI" id="CHEBI:29105"/>
        <label>3</label>
    </ligand>
</feature>
<feature type="binding site" evidence="1">
    <location>
        <position position="126"/>
    </location>
    <ligand>
        <name>Zn(2+)</name>
        <dbReference type="ChEBI" id="CHEBI:29105"/>
        <label>2</label>
    </ligand>
</feature>
<feature type="binding site" evidence="1">
    <location>
        <position position="129"/>
    </location>
    <ligand>
        <name>Zn(2+)</name>
        <dbReference type="ChEBI" id="CHEBI:29105"/>
        <label>2</label>
    </ligand>
</feature>
<feature type="binding site" evidence="1">
    <location>
        <position position="135"/>
    </location>
    <ligand>
        <name>Zn(2+)</name>
        <dbReference type="ChEBI" id="CHEBI:29105"/>
        <label>3</label>
    </ligand>
</feature>
<feature type="binding site" evidence="1">
    <location>
        <position position="137"/>
    </location>
    <ligand>
        <name>Zn(2+)</name>
        <dbReference type="ChEBI" id="CHEBI:29105"/>
        <label>3</label>
    </ligand>
</feature>
<evidence type="ECO:0000255" key="1">
    <source>
        <dbReference type="PROSITE-ProRule" id="PRU00449"/>
    </source>
</evidence>
<evidence type="ECO:0000255" key="2">
    <source>
        <dbReference type="PROSITE-ProRule" id="PRU00451"/>
    </source>
</evidence>
<evidence type="ECO:0000256" key="3">
    <source>
        <dbReference type="SAM" id="MobiDB-lite"/>
    </source>
</evidence>
<evidence type="ECO:0000269" key="4">
    <source>
    </source>
</evidence>
<evidence type="ECO:0000269" key="5">
    <source>
    </source>
</evidence>
<gene>
    <name type="primary">SAP1</name>
    <name type="synonym">ISAP1</name>
    <name type="ORF">OsI_030789</name>
</gene>
<comment type="function">
    <text>May be involved in environmental stress response.</text>
</comment>
<comment type="induction">
    <text evidence="4 5">By cold, dehydration, salt, submergence, mechanical wounding, heavy metals, and abscisic acid.</text>
</comment>
<proteinExistence type="evidence at transcript level"/>
<sequence length="164" mass="17638">MAQRDKKDQEPTELRAPEITLCANSCGFPGNPATQNLCQNCFLAATASTSSPSSLSSPVLDKQPPRPAAPLVEPQAPLPPPVEEMASALATAPAPVAKTSAVNRCSRCRKRVGLTGFRCRCGHLFCGEHRYSDRHGCSYDYKSAARDAIARDNPVVRAAKIVRF</sequence>
<dbReference type="EMBL" id="AF140722">
    <property type="protein sequence ID" value="AAF74344.1"/>
    <property type="molecule type" value="mRNA"/>
</dbReference>
<dbReference type="EMBL" id="AY137590">
    <property type="protein sequence ID" value="AAN15744.1"/>
    <property type="molecule type" value="Genomic_DNA"/>
</dbReference>
<dbReference type="EMBL" id="CM000134">
    <property type="protein sequence ID" value="EAZ09557.1"/>
    <property type="molecule type" value="Genomic_DNA"/>
</dbReference>
<dbReference type="EMBL" id="EF206785">
    <property type="protein sequence ID" value="ABQ12733.1"/>
    <property type="molecule type" value="mRNA"/>
</dbReference>
<dbReference type="EMBL" id="EF576510">
    <property type="protein sequence ID" value="ABR26098.1"/>
    <property type="molecule type" value="mRNA"/>
</dbReference>
<dbReference type="SMR" id="A2Z2J6"/>
<dbReference type="STRING" id="39946.A2Z2J6"/>
<dbReference type="EnsemblPlants" id="BGIOSGA031005-TA">
    <property type="protein sequence ID" value="BGIOSGA031005-PA"/>
    <property type="gene ID" value="BGIOSGA031005"/>
</dbReference>
<dbReference type="EnsemblPlants" id="OsGoSa_09g0014560.01">
    <property type="protein sequence ID" value="OsGoSa_09g0014560.01"/>
    <property type="gene ID" value="OsGoSa_09g0014560"/>
</dbReference>
<dbReference type="EnsemblPlants" id="OsIR64_09g0014670.01">
    <property type="protein sequence ID" value="OsIR64_09g0014670.01"/>
    <property type="gene ID" value="OsIR64_09g0014670"/>
</dbReference>
<dbReference type="EnsemblPlants" id="OsKYG_09g0014510.01">
    <property type="protein sequence ID" value="OsKYG_09g0014510.01"/>
    <property type="gene ID" value="OsKYG_09g0014510"/>
</dbReference>
<dbReference type="EnsemblPlants" id="OsLaMu_09g0014520.01">
    <property type="protein sequence ID" value="OsLaMu_09g0014520.01"/>
    <property type="gene ID" value="OsLaMu_09g0014520"/>
</dbReference>
<dbReference type="EnsemblPlants" id="OsLima_09g0014660.01">
    <property type="protein sequence ID" value="OsLima_09g0014660.01"/>
    <property type="gene ID" value="OsLima_09g0014660"/>
</dbReference>
<dbReference type="EnsemblPlants" id="OsLiXu_09g0014440.01">
    <property type="protein sequence ID" value="OsLiXu_09g0014440.01"/>
    <property type="gene ID" value="OsLiXu_09g0014440"/>
</dbReference>
<dbReference type="EnsemblPlants" id="OsLiXu_Ung0053230.01">
    <property type="protein sequence ID" value="OsLiXu_Ung0053230.01"/>
    <property type="gene ID" value="OsLiXu_Ung0053230"/>
</dbReference>
<dbReference type="EnsemblPlants" id="OsMH63_09G015200_01">
    <property type="protein sequence ID" value="OsMH63_09G015200_01"/>
    <property type="gene ID" value="OsMH63_09G015200"/>
</dbReference>
<dbReference type="EnsemblPlants" id="OsPr106_09g0014810.01">
    <property type="protein sequence ID" value="OsPr106_09g0014810.01"/>
    <property type="gene ID" value="OsPr106_09g0014810"/>
</dbReference>
<dbReference type="EnsemblPlants" id="OsZS97_09G014780_01">
    <property type="protein sequence ID" value="OsZS97_09G014780_01"/>
    <property type="gene ID" value="OsZS97_09G014780"/>
</dbReference>
<dbReference type="Gramene" id="BGIOSGA031005-TA">
    <property type="protein sequence ID" value="BGIOSGA031005-PA"/>
    <property type="gene ID" value="BGIOSGA031005"/>
</dbReference>
<dbReference type="Gramene" id="OsGoSa_09g0014560.01">
    <property type="protein sequence ID" value="OsGoSa_09g0014560.01"/>
    <property type="gene ID" value="OsGoSa_09g0014560"/>
</dbReference>
<dbReference type="Gramene" id="OsIR64_09g0014670.01">
    <property type="protein sequence ID" value="OsIR64_09g0014670.01"/>
    <property type="gene ID" value="OsIR64_09g0014670"/>
</dbReference>
<dbReference type="Gramene" id="OsKYG_09g0014510.01">
    <property type="protein sequence ID" value="OsKYG_09g0014510.01"/>
    <property type="gene ID" value="OsKYG_09g0014510"/>
</dbReference>
<dbReference type="Gramene" id="OsLaMu_09g0014520.01">
    <property type="protein sequence ID" value="OsLaMu_09g0014520.01"/>
    <property type="gene ID" value="OsLaMu_09g0014520"/>
</dbReference>
<dbReference type="Gramene" id="OsLima_09g0014660.01">
    <property type="protein sequence ID" value="OsLima_09g0014660.01"/>
    <property type="gene ID" value="OsLima_09g0014660"/>
</dbReference>
<dbReference type="Gramene" id="OsLiXu_09g0014440.01">
    <property type="protein sequence ID" value="OsLiXu_09g0014440.01"/>
    <property type="gene ID" value="OsLiXu_09g0014440"/>
</dbReference>
<dbReference type="Gramene" id="OsLiXu_Ung0053230.01">
    <property type="protein sequence ID" value="OsLiXu_Ung0053230.01"/>
    <property type="gene ID" value="OsLiXu_Ung0053230"/>
</dbReference>
<dbReference type="Gramene" id="OsMH63_09G015200_01">
    <property type="protein sequence ID" value="OsMH63_09G015200_01"/>
    <property type="gene ID" value="OsMH63_09G015200"/>
</dbReference>
<dbReference type="Gramene" id="OsPr106_09g0014810.01">
    <property type="protein sequence ID" value="OsPr106_09g0014810.01"/>
    <property type="gene ID" value="OsPr106_09g0014810"/>
</dbReference>
<dbReference type="Gramene" id="OsZS97_09G014780_01">
    <property type="protein sequence ID" value="OsZS97_09G014780_01"/>
    <property type="gene ID" value="OsZS97_09G014780"/>
</dbReference>
<dbReference type="HOGENOM" id="CLU_057016_5_3_1"/>
<dbReference type="OMA" id="CFNATTT"/>
<dbReference type="OrthoDB" id="428577at2759"/>
<dbReference type="Proteomes" id="UP000007015">
    <property type="component" value="Chromosome 9"/>
</dbReference>
<dbReference type="GO" id="GO:0003677">
    <property type="term" value="F:DNA binding"/>
    <property type="evidence" value="ECO:0007669"/>
    <property type="project" value="InterPro"/>
</dbReference>
<dbReference type="GO" id="GO:0004842">
    <property type="term" value="F:ubiquitin-protein transferase activity"/>
    <property type="evidence" value="ECO:0007669"/>
    <property type="project" value="TreeGrafter"/>
</dbReference>
<dbReference type="GO" id="GO:0008270">
    <property type="term" value="F:zinc ion binding"/>
    <property type="evidence" value="ECO:0007669"/>
    <property type="project" value="UniProtKB-KW"/>
</dbReference>
<dbReference type="GO" id="GO:0016567">
    <property type="term" value="P:protein ubiquitination"/>
    <property type="evidence" value="ECO:0007669"/>
    <property type="project" value="TreeGrafter"/>
</dbReference>
<dbReference type="FunFam" id="1.20.5.4770:FF:000006">
    <property type="entry name" value="Zinc finger A20 and AN1 domain-containing stress-associated protein 1"/>
    <property type="match status" value="1"/>
</dbReference>
<dbReference type="FunFam" id="4.10.1110.10:FF:000001">
    <property type="entry name" value="Zinc finger AN1-type containing 6"/>
    <property type="match status" value="1"/>
</dbReference>
<dbReference type="Gene3D" id="1.20.5.4770">
    <property type="match status" value="1"/>
</dbReference>
<dbReference type="Gene3D" id="4.10.1110.10">
    <property type="entry name" value="AN1-like Zinc finger"/>
    <property type="match status" value="1"/>
</dbReference>
<dbReference type="InterPro" id="IPR035896">
    <property type="entry name" value="AN1-like_Znf"/>
</dbReference>
<dbReference type="InterPro" id="IPR050652">
    <property type="entry name" value="AN1_A20_ZnFinger"/>
</dbReference>
<dbReference type="InterPro" id="IPR002653">
    <property type="entry name" value="Znf_A20"/>
</dbReference>
<dbReference type="InterPro" id="IPR000058">
    <property type="entry name" value="Znf_AN1"/>
</dbReference>
<dbReference type="PANTHER" id="PTHR10634">
    <property type="entry name" value="AN1-TYPE ZINC FINGER PROTEIN"/>
    <property type="match status" value="1"/>
</dbReference>
<dbReference type="PANTHER" id="PTHR10634:SF22">
    <property type="entry name" value="ZINC FINGER A20 AND AN1 DOMAIN-CONTAINING STRESS-ASSOCIATED PROTEIN 5"/>
    <property type="match status" value="1"/>
</dbReference>
<dbReference type="Pfam" id="PF01754">
    <property type="entry name" value="zf-A20"/>
    <property type="match status" value="1"/>
</dbReference>
<dbReference type="Pfam" id="PF01428">
    <property type="entry name" value="zf-AN1"/>
    <property type="match status" value="1"/>
</dbReference>
<dbReference type="SMART" id="SM00259">
    <property type="entry name" value="ZnF_A20"/>
    <property type="match status" value="1"/>
</dbReference>
<dbReference type="SMART" id="SM00154">
    <property type="entry name" value="ZnF_AN1"/>
    <property type="match status" value="1"/>
</dbReference>
<dbReference type="SUPFAM" id="SSF118310">
    <property type="entry name" value="AN1-like Zinc finger"/>
    <property type="match status" value="1"/>
</dbReference>
<dbReference type="SUPFAM" id="SSF57716">
    <property type="entry name" value="Glucocorticoid receptor-like (DNA-binding domain)"/>
    <property type="match status" value="1"/>
</dbReference>
<dbReference type="PROSITE" id="PS51036">
    <property type="entry name" value="ZF_A20"/>
    <property type="match status" value="1"/>
</dbReference>
<dbReference type="PROSITE" id="PS51039">
    <property type="entry name" value="ZF_AN1"/>
    <property type="match status" value="1"/>
</dbReference>
<protein>
    <recommendedName>
        <fullName>Zinc finger A20 and AN1 domain-containing stress-associated protein 1</fullName>
        <shortName>OsSAP1</shortName>
    </recommendedName>
    <alternativeName>
        <fullName>Multiple stress-responsive zinc finger protein ISAP1</fullName>
        <shortName>OsiSAP1</shortName>
    </alternativeName>
</protein>
<organism>
    <name type="scientific">Oryza sativa subsp. indica</name>
    <name type="common">Rice</name>
    <dbReference type="NCBI Taxonomy" id="39946"/>
    <lineage>
        <taxon>Eukaryota</taxon>
        <taxon>Viridiplantae</taxon>
        <taxon>Streptophyta</taxon>
        <taxon>Embryophyta</taxon>
        <taxon>Tracheophyta</taxon>
        <taxon>Spermatophyta</taxon>
        <taxon>Magnoliopsida</taxon>
        <taxon>Liliopsida</taxon>
        <taxon>Poales</taxon>
        <taxon>Poaceae</taxon>
        <taxon>BOP clade</taxon>
        <taxon>Oryzoideae</taxon>
        <taxon>Oryzeae</taxon>
        <taxon>Oryzinae</taxon>
        <taxon>Oryza</taxon>
        <taxon>Oryza sativa</taxon>
    </lineage>
</organism>